<name>HEM3_IDILO</name>
<protein>
    <recommendedName>
        <fullName evidence="1">Porphobilinogen deaminase</fullName>
        <shortName evidence="1">PBG</shortName>
        <ecNumber evidence="1">2.5.1.61</ecNumber>
    </recommendedName>
    <alternativeName>
        <fullName evidence="1">Hydroxymethylbilane synthase</fullName>
        <shortName evidence="1">HMBS</shortName>
    </alternativeName>
    <alternativeName>
        <fullName evidence="1">Pre-uroporphyrinogen synthase</fullName>
    </alternativeName>
</protein>
<accession>Q5QUS3</accession>
<reference key="1">
    <citation type="journal article" date="2004" name="Proc. Natl. Acad. Sci. U.S.A.">
        <title>Genome sequence of the deep-sea gamma-proteobacterium Idiomarina loihiensis reveals amino acid fermentation as a source of carbon and energy.</title>
        <authorList>
            <person name="Hou S."/>
            <person name="Saw J.H."/>
            <person name="Lee K.S."/>
            <person name="Freitas T.A."/>
            <person name="Belisle C."/>
            <person name="Kawarabayasi Y."/>
            <person name="Donachie S.P."/>
            <person name="Pikina A."/>
            <person name="Galperin M.Y."/>
            <person name="Koonin E.V."/>
            <person name="Makarova K.S."/>
            <person name="Omelchenko M.V."/>
            <person name="Sorokin A."/>
            <person name="Wolf Y.I."/>
            <person name="Li Q.X."/>
            <person name="Keum Y.S."/>
            <person name="Campbell S."/>
            <person name="Denery J."/>
            <person name="Aizawa S."/>
            <person name="Shibata S."/>
            <person name="Malahoff A."/>
            <person name="Alam M."/>
        </authorList>
    </citation>
    <scope>NUCLEOTIDE SEQUENCE [LARGE SCALE GENOMIC DNA]</scope>
    <source>
        <strain>ATCC BAA-735 / DSM 15497 / L2-TR</strain>
    </source>
</reference>
<keyword id="KW-0627">Porphyrin biosynthesis</keyword>
<keyword id="KW-1185">Reference proteome</keyword>
<keyword id="KW-0808">Transferase</keyword>
<comment type="function">
    <text evidence="1">Tetrapolymerization of the monopyrrole PBG into the hydroxymethylbilane pre-uroporphyrinogen in several discrete steps.</text>
</comment>
<comment type="catalytic activity">
    <reaction evidence="1">
        <text>4 porphobilinogen + H2O = hydroxymethylbilane + 4 NH4(+)</text>
        <dbReference type="Rhea" id="RHEA:13185"/>
        <dbReference type="ChEBI" id="CHEBI:15377"/>
        <dbReference type="ChEBI" id="CHEBI:28938"/>
        <dbReference type="ChEBI" id="CHEBI:57845"/>
        <dbReference type="ChEBI" id="CHEBI:58126"/>
        <dbReference type="EC" id="2.5.1.61"/>
    </reaction>
</comment>
<comment type="cofactor">
    <cofactor evidence="1">
        <name>dipyrromethane</name>
        <dbReference type="ChEBI" id="CHEBI:60342"/>
    </cofactor>
    <text evidence="1">Binds 1 dipyrromethane group covalently.</text>
</comment>
<comment type="pathway">
    <text evidence="1">Porphyrin-containing compound metabolism; protoporphyrin-IX biosynthesis; coproporphyrinogen-III from 5-aminolevulinate: step 2/4.</text>
</comment>
<comment type="subunit">
    <text evidence="1">Monomer.</text>
</comment>
<comment type="miscellaneous">
    <text evidence="1">The porphobilinogen subunits are added to the dipyrromethane group.</text>
</comment>
<comment type="similarity">
    <text evidence="1">Belongs to the HMBS family.</text>
</comment>
<feature type="chain" id="PRO_0000142947" description="Porphobilinogen deaminase">
    <location>
        <begin position="1"/>
        <end position="313"/>
    </location>
</feature>
<feature type="modified residue" description="S-(dipyrrolylmethanemethyl)cysteine" evidence="1">
    <location>
        <position position="241"/>
    </location>
</feature>
<gene>
    <name evidence="1" type="primary">hemC</name>
    <name type="ordered locus">IL2558</name>
</gene>
<dbReference type="EC" id="2.5.1.61" evidence="1"/>
<dbReference type="EMBL" id="AE017340">
    <property type="protein sequence ID" value="AAV83390.1"/>
    <property type="molecule type" value="Genomic_DNA"/>
</dbReference>
<dbReference type="RefSeq" id="WP_011235782.1">
    <property type="nucleotide sequence ID" value="NC_006512.1"/>
</dbReference>
<dbReference type="SMR" id="Q5QUS3"/>
<dbReference type="STRING" id="283942.IL2558"/>
<dbReference type="GeneID" id="41337751"/>
<dbReference type="KEGG" id="ilo:IL2558"/>
<dbReference type="eggNOG" id="COG0181">
    <property type="taxonomic scope" value="Bacteria"/>
</dbReference>
<dbReference type="HOGENOM" id="CLU_019704_0_2_6"/>
<dbReference type="OrthoDB" id="9810298at2"/>
<dbReference type="UniPathway" id="UPA00251">
    <property type="reaction ID" value="UER00319"/>
</dbReference>
<dbReference type="Proteomes" id="UP000001171">
    <property type="component" value="Chromosome"/>
</dbReference>
<dbReference type="GO" id="GO:0005737">
    <property type="term" value="C:cytoplasm"/>
    <property type="evidence" value="ECO:0007669"/>
    <property type="project" value="TreeGrafter"/>
</dbReference>
<dbReference type="GO" id="GO:0004418">
    <property type="term" value="F:hydroxymethylbilane synthase activity"/>
    <property type="evidence" value="ECO:0007669"/>
    <property type="project" value="UniProtKB-UniRule"/>
</dbReference>
<dbReference type="GO" id="GO:0006782">
    <property type="term" value="P:protoporphyrinogen IX biosynthetic process"/>
    <property type="evidence" value="ECO:0007669"/>
    <property type="project" value="UniProtKB-UniRule"/>
</dbReference>
<dbReference type="CDD" id="cd13646">
    <property type="entry name" value="PBP2_EcHMBS_like"/>
    <property type="match status" value="1"/>
</dbReference>
<dbReference type="FunFam" id="3.30.160.40:FF:000002">
    <property type="entry name" value="Porphobilinogen deaminase"/>
    <property type="match status" value="1"/>
</dbReference>
<dbReference type="FunFam" id="3.40.190.10:FF:000004">
    <property type="entry name" value="Porphobilinogen deaminase"/>
    <property type="match status" value="1"/>
</dbReference>
<dbReference type="FunFam" id="3.40.190.10:FF:000005">
    <property type="entry name" value="Porphobilinogen deaminase"/>
    <property type="match status" value="1"/>
</dbReference>
<dbReference type="Gene3D" id="3.40.190.10">
    <property type="entry name" value="Periplasmic binding protein-like II"/>
    <property type="match status" value="2"/>
</dbReference>
<dbReference type="Gene3D" id="3.30.160.40">
    <property type="entry name" value="Porphobilinogen deaminase, C-terminal domain"/>
    <property type="match status" value="1"/>
</dbReference>
<dbReference type="HAMAP" id="MF_00260">
    <property type="entry name" value="Porphobil_deam"/>
    <property type="match status" value="1"/>
</dbReference>
<dbReference type="InterPro" id="IPR000860">
    <property type="entry name" value="HemC"/>
</dbReference>
<dbReference type="InterPro" id="IPR022419">
    <property type="entry name" value="Porphobilin_deaminase_cofac_BS"/>
</dbReference>
<dbReference type="InterPro" id="IPR022417">
    <property type="entry name" value="Porphobilin_deaminase_N"/>
</dbReference>
<dbReference type="InterPro" id="IPR022418">
    <property type="entry name" value="Porphobilinogen_deaminase_C"/>
</dbReference>
<dbReference type="InterPro" id="IPR036803">
    <property type="entry name" value="Porphobilinogen_deaminase_C_sf"/>
</dbReference>
<dbReference type="NCBIfam" id="TIGR00212">
    <property type="entry name" value="hemC"/>
    <property type="match status" value="1"/>
</dbReference>
<dbReference type="PANTHER" id="PTHR11557">
    <property type="entry name" value="PORPHOBILINOGEN DEAMINASE"/>
    <property type="match status" value="1"/>
</dbReference>
<dbReference type="PANTHER" id="PTHR11557:SF0">
    <property type="entry name" value="PORPHOBILINOGEN DEAMINASE"/>
    <property type="match status" value="1"/>
</dbReference>
<dbReference type="Pfam" id="PF01379">
    <property type="entry name" value="Porphobil_deam"/>
    <property type="match status" value="1"/>
</dbReference>
<dbReference type="Pfam" id="PF03900">
    <property type="entry name" value="Porphobil_deamC"/>
    <property type="match status" value="1"/>
</dbReference>
<dbReference type="PIRSF" id="PIRSF001438">
    <property type="entry name" value="4pyrrol_synth_OHMeBilane_synth"/>
    <property type="match status" value="1"/>
</dbReference>
<dbReference type="PRINTS" id="PR00151">
    <property type="entry name" value="PORPHBDMNASE"/>
</dbReference>
<dbReference type="SUPFAM" id="SSF53850">
    <property type="entry name" value="Periplasmic binding protein-like II"/>
    <property type="match status" value="1"/>
</dbReference>
<dbReference type="SUPFAM" id="SSF54782">
    <property type="entry name" value="Porphobilinogen deaminase (hydroxymethylbilane synthase), C-terminal domain"/>
    <property type="match status" value="1"/>
</dbReference>
<dbReference type="PROSITE" id="PS00533">
    <property type="entry name" value="PORPHOBILINOGEN_DEAM"/>
    <property type="match status" value="1"/>
</dbReference>
<organism>
    <name type="scientific">Idiomarina loihiensis (strain ATCC BAA-735 / DSM 15497 / L2-TR)</name>
    <dbReference type="NCBI Taxonomy" id="283942"/>
    <lineage>
        <taxon>Bacteria</taxon>
        <taxon>Pseudomonadati</taxon>
        <taxon>Pseudomonadota</taxon>
        <taxon>Gammaproteobacteria</taxon>
        <taxon>Alteromonadales</taxon>
        <taxon>Idiomarinaceae</taxon>
        <taxon>Idiomarina</taxon>
    </lineage>
</organism>
<evidence type="ECO:0000255" key="1">
    <source>
        <dbReference type="HAMAP-Rule" id="MF_00260"/>
    </source>
</evidence>
<sequence length="313" mass="34348">MTQRVRIATRKSKLALWQAEHIQQRLEELHPGLSVELVPMSTKGDVILDTPLAKIGGKGLFVKELEVAMLEGRADIAVHSMKDLPVEFPPGLELHTICEREDPRDAFVSNNYKNLNELPEGAVVGTCSLRRRCQVKEQFPHLVIKDLRGNVQTRLRKLDEGEFDAIILAASGLIRLELGDRITSFIPVEQSLPANGQGALGIECRSDDDEMKALLAPLQCQETRTRVLAERAMNRGLDGGCQVPIGAYAELEGDEVYLRGLVGEPDGGKVLRDEVRGPASKAEELGSELAERLLKQGAAEILSAVYDSESSHS</sequence>
<proteinExistence type="inferred from homology"/>